<name>CYPD_YEAST</name>
<evidence type="ECO:0000255" key="1"/>
<evidence type="ECO:0000255" key="2">
    <source>
        <dbReference type="PROSITE-ProRule" id="PRU00156"/>
    </source>
</evidence>
<evidence type="ECO:0000255" key="3">
    <source>
        <dbReference type="PROSITE-ProRule" id="PRU10138"/>
    </source>
</evidence>
<evidence type="ECO:0000269" key="4">
    <source>
    </source>
</evidence>
<evidence type="ECO:0000269" key="5">
    <source>
    </source>
</evidence>
<evidence type="ECO:0000303" key="6">
    <source>
    </source>
</evidence>
<evidence type="ECO:0000303" key="7">
    <source>
    </source>
</evidence>
<evidence type="ECO:0000305" key="8"/>
<evidence type="ECO:0000312" key="9">
    <source>
        <dbReference type="SGD" id="S000002712"/>
    </source>
</evidence>
<comment type="function">
    <text>PPIases accelerate the folding of proteins. It catalyzes the cis-trans isomerization of proline imidic peptide bonds in oligopeptides.</text>
</comment>
<comment type="catalytic activity">
    <reaction>
        <text>[protein]-peptidylproline (omega=180) = [protein]-peptidylproline (omega=0)</text>
        <dbReference type="Rhea" id="RHEA:16237"/>
        <dbReference type="Rhea" id="RHEA-COMP:10747"/>
        <dbReference type="Rhea" id="RHEA-COMP:10748"/>
        <dbReference type="ChEBI" id="CHEBI:83833"/>
        <dbReference type="ChEBI" id="CHEBI:83834"/>
        <dbReference type="EC" id="5.2.1.8"/>
    </reaction>
</comment>
<comment type="subcellular location">
    <subcellularLocation>
        <location evidence="4">Endoplasmic reticulum lumen</location>
    </subcellularLocation>
</comment>
<comment type="induction">
    <text evidence="5">Induced by ER stress caused by treatment with tunicamycin.</text>
</comment>
<comment type="similarity">
    <text evidence="8">Belongs to the cyclophilin-type PPIase family. PPIase B subfamily.</text>
</comment>
<gene>
    <name evidence="7" type="primary">CPR5</name>
    <name type="synonym">CYP5</name>
    <name evidence="6" type="synonym">CYPD</name>
    <name evidence="9" type="ordered locus">YDR304C</name>
    <name type="ORF">D9740.14</name>
</gene>
<organism>
    <name type="scientific">Saccharomyces cerevisiae (strain ATCC 204508 / S288c)</name>
    <name type="common">Baker's yeast</name>
    <dbReference type="NCBI Taxonomy" id="559292"/>
    <lineage>
        <taxon>Eukaryota</taxon>
        <taxon>Fungi</taxon>
        <taxon>Dikarya</taxon>
        <taxon>Ascomycota</taxon>
        <taxon>Saccharomycotina</taxon>
        <taxon>Saccharomycetes</taxon>
        <taxon>Saccharomycetales</taxon>
        <taxon>Saccharomycetaceae</taxon>
        <taxon>Saccharomyces</taxon>
    </lineage>
</organism>
<protein>
    <recommendedName>
        <fullName evidence="8">Peptidyl-prolyl cis-trans isomerase D</fullName>
        <shortName>PPIase D</shortName>
        <ecNumber>5.2.1.8</ecNumber>
    </recommendedName>
    <alternativeName>
        <fullName evidence="6">Cyclophilin D</fullName>
    </alternativeName>
    <alternativeName>
        <fullName evidence="7">Cyclosporin-sensitive proline rotamase 5</fullName>
    </alternativeName>
    <alternativeName>
        <fullName>Rotamase D</fullName>
    </alternativeName>
</protein>
<reference key="1">
    <citation type="journal article" date="1993" name="J. Mol. Biol.">
        <title>A Saccharomyces cerevisiae cyclophilin resident in the endoplasmic reticulum.</title>
        <authorList>
            <person name="Frigerio G."/>
            <person name="Pelham H.R.B."/>
        </authorList>
    </citation>
    <scope>NUCLEOTIDE SEQUENCE [MRNA]</scope>
    <scope>SUBCELLULAR LOCATION</scope>
</reference>
<reference key="2">
    <citation type="journal article" date="1997" name="Nature">
        <title>The nucleotide sequence of Saccharomyces cerevisiae chromosome IV.</title>
        <authorList>
            <person name="Jacq C."/>
            <person name="Alt-Moerbe J."/>
            <person name="Andre B."/>
            <person name="Arnold W."/>
            <person name="Bahr A."/>
            <person name="Ballesta J.P.G."/>
            <person name="Bargues M."/>
            <person name="Baron L."/>
            <person name="Becker A."/>
            <person name="Biteau N."/>
            <person name="Bloecker H."/>
            <person name="Blugeon C."/>
            <person name="Boskovic J."/>
            <person name="Brandt P."/>
            <person name="Brueckner M."/>
            <person name="Buitrago M.J."/>
            <person name="Coster F."/>
            <person name="Delaveau T."/>
            <person name="del Rey F."/>
            <person name="Dujon B."/>
            <person name="Eide L.G."/>
            <person name="Garcia-Cantalejo J.M."/>
            <person name="Goffeau A."/>
            <person name="Gomez-Peris A."/>
            <person name="Granotier C."/>
            <person name="Hanemann V."/>
            <person name="Hankeln T."/>
            <person name="Hoheisel J.D."/>
            <person name="Jaeger W."/>
            <person name="Jimenez A."/>
            <person name="Jonniaux J.-L."/>
            <person name="Kraemer C."/>
            <person name="Kuester H."/>
            <person name="Laamanen P."/>
            <person name="Legros Y."/>
            <person name="Louis E.J."/>
            <person name="Moeller-Rieker S."/>
            <person name="Monnet A."/>
            <person name="Moro M."/>
            <person name="Mueller-Auer S."/>
            <person name="Nussbaumer B."/>
            <person name="Paricio N."/>
            <person name="Paulin L."/>
            <person name="Perea J."/>
            <person name="Perez-Alonso M."/>
            <person name="Perez-Ortin J.E."/>
            <person name="Pohl T.M."/>
            <person name="Prydz H."/>
            <person name="Purnelle B."/>
            <person name="Rasmussen S.W."/>
            <person name="Remacha M.A."/>
            <person name="Revuelta J.L."/>
            <person name="Rieger M."/>
            <person name="Salom D."/>
            <person name="Saluz H.P."/>
            <person name="Saiz J.E."/>
            <person name="Saren A.-M."/>
            <person name="Schaefer M."/>
            <person name="Scharfe M."/>
            <person name="Schmidt E.R."/>
            <person name="Schneider C."/>
            <person name="Scholler P."/>
            <person name="Schwarz S."/>
            <person name="Soler-Mira A."/>
            <person name="Urrestarazu L.A."/>
            <person name="Verhasselt P."/>
            <person name="Vissers S."/>
            <person name="Voet M."/>
            <person name="Volckaert G."/>
            <person name="Wagner G."/>
            <person name="Wambutt R."/>
            <person name="Wedler E."/>
            <person name="Wedler H."/>
            <person name="Woelfl S."/>
            <person name="Harris D.E."/>
            <person name="Bowman S."/>
            <person name="Brown D."/>
            <person name="Churcher C.M."/>
            <person name="Connor R."/>
            <person name="Dedman K."/>
            <person name="Gentles S."/>
            <person name="Hamlin N."/>
            <person name="Hunt S."/>
            <person name="Jones L."/>
            <person name="McDonald S."/>
            <person name="Murphy L.D."/>
            <person name="Niblett D."/>
            <person name="Odell C."/>
            <person name="Oliver K."/>
            <person name="Rajandream M.A."/>
            <person name="Richards C."/>
            <person name="Shore L."/>
            <person name="Walsh S.V."/>
            <person name="Barrell B.G."/>
            <person name="Dietrich F.S."/>
            <person name="Mulligan J.T."/>
            <person name="Allen E."/>
            <person name="Araujo R."/>
            <person name="Aviles E."/>
            <person name="Berno A."/>
            <person name="Carpenter J."/>
            <person name="Chen E."/>
            <person name="Cherry J.M."/>
            <person name="Chung E."/>
            <person name="Duncan M."/>
            <person name="Hunicke-Smith S."/>
            <person name="Hyman R.W."/>
            <person name="Komp C."/>
            <person name="Lashkari D."/>
            <person name="Lew H."/>
            <person name="Lin D."/>
            <person name="Mosedale D."/>
            <person name="Nakahara K."/>
            <person name="Namath A."/>
            <person name="Oefner P."/>
            <person name="Oh C."/>
            <person name="Petel F.X."/>
            <person name="Roberts D."/>
            <person name="Schramm S."/>
            <person name="Schroeder M."/>
            <person name="Shogren T."/>
            <person name="Shroff N."/>
            <person name="Winant A."/>
            <person name="Yelton M.A."/>
            <person name="Botstein D."/>
            <person name="Davis R.W."/>
            <person name="Johnston M."/>
            <person name="Andrews S."/>
            <person name="Brinkman R."/>
            <person name="Cooper J."/>
            <person name="Ding H."/>
            <person name="Du Z."/>
            <person name="Favello A."/>
            <person name="Fulton L."/>
            <person name="Gattung S."/>
            <person name="Greco T."/>
            <person name="Hallsworth K."/>
            <person name="Hawkins J."/>
            <person name="Hillier L.W."/>
            <person name="Jier M."/>
            <person name="Johnson D."/>
            <person name="Johnston L."/>
            <person name="Kirsten J."/>
            <person name="Kucaba T."/>
            <person name="Langston Y."/>
            <person name="Latreille P."/>
            <person name="Le T."/>
            <person name="Mardis E."/>
            <person name="Menezes S."/>
            <person name="Miller N."/>
            <person name="Nhan M."/>
            <person name="Pauley A."/>
            <person name="Peluso D."/>
            <person name="Rifkin L."/>
            <person name="Riles L."/>
            <person name="Taich A."/>
            <person name="Trevaskis E."/>
            <person name="Vignati D."/>
            <person name="Wilcox L."/>
            <person name="Wohldman P."/>
            <person name="Vaudin M."/>
            <person name="Wilson R."/>
            <person name="Waterston R."/>
            <person name="Albermann K."/>
            <person name="Hani J."/>
            <person name="Heumann K."/>
            <person name="Kleine K."/>
            <person name="Mewes H.-W."/>
            <person name="Zollner A."/>
            <person name="Zaccaria P."/>
        </authorList>
    </citation>
    <scope>NUCLEOTIDE SEQUENCE [LARGE SCALE GENOMIC DNA]</scope>
    <source>
        <strain>ATCC 204508 / S288c</strain>
    </source>
</reference>
<reference key="3">
    <citation type="journal article" date="2014" name="G3 (Bethesda)">
        <title>The reference genome sequence of Saccharomyces cerevisiae: Then and now.</title>
        <authorList>
            <person name="Engel S.R."/>
            <person name="Dietrich F.S."/>
            <person name="Fisk D.G."/>
            <person name="Binkley G."/>
            <person name="Balakrishnan R."/>
            <person name="Costanzo M.C."/>
            <person name="Dwight S.S."/>
            <person name="Hitz B.C."/>
            <person name="Karra K."/>
            <person name="Nash R.S."/>
            <person name="Weng S."/>
            <person name="Wong E.D."/>
            <person name="Lloyd P."/>
            <person name="Skrzypek M.S."/>
            <person name="Miyasato S.R."/>
            <person name="Simison M."/>
            <person name="Cherry J.M."/>
        </authorList>
    </citation>
    <scope>GENOME REANNOTATION</scope>
    <source>
        <strain>ATCC 204508 / S288c</strain>
    </source>
</reference>
<reference key="4">
    <citation type="journal article" date="2007" name="Genome Res.">
        <title>Approaching a complete repository of sequence-verified protein-encoding clones for Saccharomyces cerevisiae.</title>
        <authorList>
            <person name="Hu Y."/>
            <person name="Rolfs A."/>
            <person name="Bhullar B."/>
            <person name="Murthy T.V.S."/>
            <person name="Zhu C."/>
            <person name="Berger M.F."/>
            <person name="Camargo A.A."/>
            <person name="Kelley F."/>
            <person name="McCarron S."/>
            <person name="Jepson D."/>
            <person name="Richardson A."/>
            <person name="Raphael J."/>
            <person name="Moreira D."/>
            <person name="Taycher E."/>
            <person name="Zuo D."/>
            <person name="Mohr S."/>
            <person name="Kane M.F."/>
            <person name="Williamson J."/>
            <person name="Simpson A.J.G."/>
            <person name="Bulyk M.L."/>
            <person name="Harlow E."/>
            <person name="Marsischky G."/>
            <person name="Kolodner R.D."/>
            <person name="LaBaer J."/>
        </authorList>
    </citation>
    <scope>NUCLEOTIDE SEQUENCE [GENOMIC DNA]</scope>
    <source>
        <strain>ATCC 204508 / S288c</strain>
    </source>
</reference>
<reference key="5">
    <citation type="journal article" date="1997" name="Proc. Natl. Acad. Sci. U.S.A.">
        <title>All cyclophilins and FK506 binding proteins are, individually and collectively, dispensable for viability in Saccharomyces cerevisiae.</title>
        <authorList>
            <person name="Dolinski K."/>
            <person name="Muir S."/>
            <person name="Cardenas M."/>
            <person name="Heitman J."/>
        </authorList>
    </citation>
    <scope>INDUCTION</scope>
</reference>
<reference key="6">
    <citation type="journal article" date="2018" name="J. Proteome Res.">
        <title>Enrichment-based proteogenomics identifies microproteins, missing proteins, and novel smORFs in Saccharomyces cerevisiae.</title>
        <authorList>
            <person name="He C."/>
            <person name="Jia C."/>
            <person name="Zhang Y."/>
            <person name="Xu P."/>
        </authorList>
    </citation>
    <scope>IDENTIFICATION BY MASS SPECTROMETRY</scope>
</reference>
<sequence length="225" mass="25327">MKLQFFSFITLFACLFTTAIFAKEDTAEDPEITHKVYFDINHGDKQIGRIVMGLYGLTTPQTVENFYQLTISRDPKMGYLNSIFHRVIPNFMIQGGDFTHRSGIGGKSIFGNTFKDENFDVKHDKPGRLSMANRGKNTNGSQFFITTVPCPWLDGKHVVFGEVLDGMDVVHYIENVKTDSRNMPVKEVIIVESGELETVPLDNKDAAKLQEEIKAEASEAAHDEL</sequence>
<feature type="signal peptide" evidence="1">
    <location>
        <begin position="1"/>
        <end position="22"/>
    </location>
</feature>
<feature type="chain" id="PRO_0000025488" description="Peptidyl-prolyl cis-trans isomerase D">
    <location>
        <begin position="23"/>
        <end position="225"/>
    </location>
</feature>
<feature type="domain" description="PPIase cyclophilin-type" evidence="2">
    <location>
        <begin position="37"/>
        <end position="195"/>
    </location>
</feature>
<feature type="short sequence motif" description="Prevents secretion from ER" evidence="3">
    <location>
        <begin position="222"/>
        <end position="225"/>
    </location>
</feature>
<feature type="glycosylation site" description="N-linked (GlcNAc...) asparagine" evidence="1">
    <location>
        <position position="139"/>
    </location>
</feature>
<keyword id="KW-0256">Endoplasmic reticulum</keyword>
<keyword id="KW-0325">Glycoprotein</keyword>
<keyword id="KW-0413">Isomerase</keyword>
<keyword id="KW-1185">Reference proteome</keyword>
<keyword id="KW-0697">Rotamase</keyword>
<keyword id="KW-0732">Signal</keyword>
<accession>P35176</accession>
<accession>D6VST3</accession>
<proteinExistence type="evidence at protein level"/>
<dbReference type="EC" id="5.2.1.8"/>
<dbReference type="EMBL" id="X73142">
    <property type="protein sequence ID" value="CAA51658.1"/>
    <property type="molecule type" value="mRNA"/>
</dbReference>
<dbReference type="EMBL" id="U28374">
    <property type="protein sequence ID" value="AAB64740.1"/>
    <property type="molecule type" value="Genomic_DNA"/>
</dbReference>
<dbReference type="EMBL" id="AY557734">
    <property type="protein sequence ID" value="AAS56060.1"/>
    <property type="molecule type" value="Genomic_DNA"/>
</dbReference>
<dbReference type="EMBL" id="BK006938">
    <property type="protein sequence ID" value="DAA12143.1"/>
    <property type="molecule type" value="Genomic_DNA"/>
</dbReference>
<dbReference type="PIR" id="S38324">
    <property type="entry name" value="S38324"/>
</dbReference>
<dbReference type="RefSeq" id="NP_010590.3">
    <property type="nucleotide sequence ID" value="NM_001180612.3"/>
</dbReference>
<dbReference type="SMR" id="P35176"/>
<dbReference type="BioGRID" id="32356">
    <property type="interactions" value="135"/>
</dbReference>
<dbReference type="DIP" id="DIP-5222N"/>
<dbReference type="FunCoup" id="P35176">
    <property type="interactions" value="318"/>
</dbReference>
<dbReference type="IntAct" id="P35176">
    <property type="interactions" value="40"/>
</dbReference>
<dbReference type="MINT" id="P35176"/>
<dbReference type="STRING" id="4932.YDR304C"/>
<dbReference type="GlyCosmos" id="P35176">
    <property type="glycosylation" value="1 site, No reported glycans"/>
</dbReference>
<dbReference type="GlyGen" id="P35176">
    <property type="glycosylation" value="1 site"/>
</dbReference>
<dbReference type="iPTMnet" id="P35176"/>
<dbReference type="PaxDb" id="4932-YDR304C"/>
<dbReference type="PeptideAtlas" id="P35176"/>
<dbReference type="EnsemblFungi" id="YDR304C_mRNA">
    <property type="protein sequence ID" value="YDR304C"/>
    <property type="gene ID" value="YDR304C"/>
</dbReference>
<dbReference type="GeneID" id="851898"/>
<dbReference type="KEGG" id="sce:YDR304C"/>
<dbReference type="AGR" id="SGD:S000002712"/>
<dbReference type="SGD" id="S000002712">
    <property type="gene designation" value="CPR5"/>
</dbReference>
<dbReference type="VEuPathDB" id="FungiDB:YDR304C"/>
<dbReference type="eggNOG" id="KOG0880">
    <property type="taxonomic scope" value="Eukaryota"/>
</dbReference>
<dbReference type="GeneTree" id="ENSGT00940000167766"/>
<dbReference type="HOGENOM" id="CLU_012062_4_1_1"/>
<dbReference type="InParanoid" id="P35176"/>
<dbReference type="OMA" id="ENHEITH"/>
<dbReference type="OrthoDB" id="193499at2759"/>
<dbReference type="BioCyc" id="YEAST:YDR304C-MONOMER"/>
<dbReference type="BioGRID-ORCS" id="851898">
    <property type="hits" value="5 hits in 10 CRISPR screens"/>
</dbReference>
<dbReference type="PRO" id="PR:P35176"/>
<dbReference type="Proteomes" id="UP000002311">
    <property type="component" value="Chromosome IV"/>
</dbReference>
<dbReference type="RNAct" id="P35176">
    <property type="molecule type" value="protein"/>
</dbReference>
<dbReference type="GO" id="GO:0005737">
    <property type="term" value="C:cytoplasm"/>
    <property type="evidence" value="ECO:0007005"/>
    <property type="project" value="SGD"/>
</dbReference>
<dbReference type="GO" id="GO:0005783">
    <property type="term" value="C:endoplasmic reticulum"/>
    <property type="evidence" value="ECO:0000314"/>
    <property type="project" value="SGD"/>
</dbReference>
<dbReference type="GO" id="GO:0005788">
    <property type="term" value="C:endoplasmic reticulum lumen"/>
    <property type="evidence" value="ECO:0007669"/>
    <property type="project" value="UniProtKB-SubCell"/>
</dbReference>
<dbReference type="GO" id="GO:0016018">
    <property type="term" value="F:cyclosporin A binding"/>
    <property type="evidence" value="ECO:0000318"/>
    <property type="project" value="GO_Central"/>
</dbReference>
<dbReference type="GO" id="GO:0003755">
    <property type="term" value="F:peptidyl-prolyl cis-trans isomerase activity"/>
    <property type="evidence" value="ECO:0000250"/>
    <property type="project" value="SGD"/>
</dbReference>
<dbReference type="GO" id="GO:0006457">
    <property type="term" value="P:protein folding"/>
    <property type="evidence" value="ECO:0000318"/>
    <property type="project" value="GO_Central"/>
</dbReference>
<dbReference type="FunFam" id="2.40.100.10:FF:000019">
    <property type="entry name" value="Peptidyl-prolyl cis-trans isomerase"/>
    <property type="match status" value="1"/>
</dbReference>
<dbReference type="Gene3D" id="2.40.100.10">
    <property type="entry name" value="Cyclophilin-like"/>
    <property type="match status" value="1"/>
</dbReference>
<dbReference type="InterPro" id="IPR029000">
    <property type="entry name" value="Cyclophilin-like_dom_sf"/>
</dbReference>
<dbReference type="InterPro" id="IPR020892">
    <property type="entry name" value="Cyclophilin-type_PPIase_CS"/>
</dbReference>
<dbReference type="InterPro" id="IPR002130">
    <property type="entry name" value="Cyclophilin-type_PPIase_dom"/>
</dbReference>
<dbReference type="PANTHER" id="PTHR11071">
    <property type="entry name" value="PEPTIDYL-PROLYL CIS-TRANS ISOMERASE"/>
    <property type="match status" value="1"/>
</dbReference>
<dbReference type="PANTHER" id="PTHR11071:SF561">
    <property type="entry name" value="PEPTIDYL-PROLYL CIS-TRANS ISOMERASE D-RELATED"/>
    <property type="match status" value="1"/>
</dbReference>
<dbReference type="Pfam" id="PF00160">
    <property type="entry name" value="Pro_isomerase"/>
    <property type="match status" value="1"/>
</dbReference>
<dbReference type="PRINTS" id="PR00153">
    <property type="entry name" value="CSAPPISMRASE"/>
</dbReference>
<dbReference type="SUPFAM" id="SSF50891">
    <property type="entry name" value="Cyclophilin-like"/>
    <property type="match status" value="1"/>
</dbReference>
<dbReference type="PROSITE" id="PS00170">
    <property type="entry name" value="CSA_PPIASE_1"/>
    <property type="match status" value="1"/>
</dbReference>
<dbReference type="PROSITE" id="PS50072">
    <property type="entry name" value="CSA_PPIASE_2"/>
    <property type="match status" value="1"/>
</dbReference>
<dbReference type="PROSITE" id="PS00014">
    <property type="entry name" value="ER_TARGET"/>
    <property type="match status" value="1"/>
</dbReference>